<name>RL30_YERPB</name>
<feature type="chain" id="PRO_1000144732" description="Large ribosomal subunit protein uL30">
    <location>
        <begin position="1"/>
        <end position="59"/>
    </location>
</feature>
<comment type="subunit">
    <text evidence="1">Part of the 50S ribosomal subunit.</text>
</comment>
<comment type="similarity">
    <text evidence="1">Belongs to the universal ribosomal protein uL30 family.</text>
</comment>
<accession>B2K519</accession>
<protein>
    <recommendedName>
        <fullName evidence="1">Large ribosomal subunit protein uL30</fullName>
    </recommendedName>
    <alternativeName>
        <fullName evidence="2">50S ribosomal protein L30</fullName>
    </alternativeName>
</protein>
<sequence length="59" mass="6546">MAKTIKVTQTKSSIGRLPKHKATLIGLGLRRIGHTVEREDTPAVRGMVNLVSYMVKVEE</sequence>
<keyword id="KW-0687">Ribonucleoprotein</keyword>
<keyword id="KW-0689">Ribosomal protein</keyword>
<reference key="1">
    <citation type="submission" date="2008-04" db="EMBL/GenBank/DDBJ databases">
        <title>Complete sequence of Yersinia pseudotuberculosis PB1/+.</title>
        <authorList>
            <person name="Copeland A."/>
            <person name="Lucas S."/>
            <person name="Lapidus A."/>
            <person name="Glavina del Rio T."/>
            <person name="Dalin E."/>
            <person name="Tice H."/>
            <person name="Bruce D."/>
            <person name="Goodwin L."/>
            <person name="Pitluck S."/>
            <person name="Munk A.C."/>
            <person name="Brettin T."/>
            <person name="Detter J.C."/>
            <person name="Han C."/>
            <person name="Tapia R."/>
            <person name="Schmutz J."/>
            <person name="Larimer F."/>
            <person name="Land M."/>
            <person name="Hauser L."/>
            <person name="Challacombe J.F."/>
            <person name="Green L."/>
            <person name="Lindler L.E."/>
            <person name="Nikolich M.P."/>
            <person name="Richardson P."/>
        </authorList>
    </citation>
    <scope>NUCLEOTIDE SEQUENCE [LARGE SCALE GENOMIC DNA]</scope>
    <source>
        <strain>PB1/+</strain>
    </source>
</reference>
<gene>
    <name evidence="1" type="primary">rpmD</name>
    <name type="ordered locus">YPTS_3872</name>
</gene>
<evidence type="ECO:0000255" key="1">
    <source>
        <dbReference type="HAMAP-Rule" id="MF_01371"/>
    </source>
</evidence>
<evidence type="ECO:0000305" key="2"/>
<proteinExistence type="inferred from homology"/>
<organism>
    <name type="scientific">Yersinia pseudotuberculosis serotype IB (strain PB1/+)</name>
    <dbReference type="NCBI Taxonomy" id="502801"/>
    <lineage>
        <taxon>Bacteria</taxon>
        <taxon>Pseudomonadati</taxon>
        <taxon>Pseudomonadota</taxon>
        <taxon>Gammaproteobacteria</taxon>
        <taxon>Enterobacterales</taxon>
        <taxon>Yersiniaceae</taxon>
        <taxon>Yersinia</taxon>
    </lineage>
</organism>
<dbReference type="EMBL" id="CP001048">
    <property type="protein sequence ID" value="ACC90821.1"/>
    <property type="molecule type" value="Genomic_DNA"/>
</dbReference>
<dbReference type="RefSeq" id="WP_002213339.1">
    <property type="nucleotide sequence ID" value="NZ_CP009780.1"/>
</dbReference>
<dbReference type="SMR" id="B2K519"/>
<dbReference type="GeneID" id="97454249"/>
<dbReference type="KEGG" id="ypb:YPTS_3872"/>
<dbReference type="PATRIC" id="fig|502801.10.peg.3337"/>
<dbReference type="GO" id="GO:0022625">
    <property type="term" value="C:cytosolic large ribosomal subunit"/>
    <property type="evidence" value="ECO:0007669"/>
    <property type="project" value="TreeGrafter"/>
</dbReference>
<dbReference type="GO" id="GO:0003735">
    <property type="term" value="F:structural constituent of ribosome"/>
    <property type="evidence" value="ECO:0007669"/>
    <property type="project" value="InterPro"/>
</dbReference>
<dbReference type="GO" id="GO:0006412">
    <property type="term" value="P:translation"/>
    <property type="evidence" value="ECO:0007669"/>
    <property type="project" value="UniProtKB-UniRule"/>
</dbReference>
<dbReference type="CDD" id="cd01658">
    <property type="entry name" value="Ribosomal_L30"/>
    <property type="match status" value="1"/>
</dbReference>
<dbReference type="FunFam" id="3.30.1390.20:FF:000001">
    <property type="entry name" value="50S ribosomal protein L30"/>
    <property type="match status" value="1"/>
</dbReference>
<dbReference type="Gene3D" id="3.30.1390.20">
    <property type="entry name" value="Ribosomal protein L30, ferredoxin-like fold domain"/>
    <property type="match status" value="1"/>
</dbReference>
<dbReference type="HAMAP" id="MF_01371_B">
    <property type="entry name" value="Ribosomal_uL30_B"/>
    <property type="match status" value="1"/>
</dbReference>
<dbReference type="InterPro" id="IPR036919">
    <property type="entry name" value="Ribo_uL30_ferredoxin-like_sf"/>
</dbReference>
<dbReference type="InterPro" id="IPR005996">
    <property type="entry name" value="Ribosomal_uL30_bac-type"/>
</dbReference>
<dbReference type="InterPro" id="IPR018038">
    <property type="entry name" value="Ribosomal_uL30_CS"/>
</dbReference>
<dbReference type="InterPro" id="IPR016082">
    <property type="entry name" value="Ribosomal_uL30_ferredoxin-like"/>
</dbReference>
<dbReference type="NCBIfam" id="TIGR01308">
    <property type="entry name" value="rpmD_bact"/>
    <property type="match status" value="1"/>
</dbReference>
<dbReference type="PANTHER" id="PTHR15892:SF2">
    <property type="entry name" value="LARGE RIBOSOMAL SUBUNIT PROTEIN UL30M"/>
    <property type="match status" value="1"/>
</dbReference>
<dbReference type="PANTHER" id="PTHR15892">
    <property type="entry name" value="MITOCHONDRIAL RIBOSOMAL PROTEIN L30"/>
    <property type="match status" value="1"/>
</dbReference>
<dbReference type="Pfam" id="PF00327">
    <property type="entry name" value="Ribosomal_L30"/>
    <property type="match status" value="1"/>
</dbReference>
<dbReference type="PIRSF" id="PIRSF002211">
    <property type="entry name" value="Ribosomal_L30_bac-type"/>
    <property type="match status" value="1"/>
</dbReference>
<dbReference type="SUPFAM" id="SSF55129">
    <property type="entry name" value="Ribosomal protein L30p/L7e"/>
    <property type="match status" value="1"/>
</dbReference>
<dbReference type="PROSITE" id="PS00634">
    <property type="entry name" value="RIBOSOMAL_L30"/>
    <property type="match status" value="1"/>
</dbReference>